<sequence length="165" mass="19292">MNLFCISLEGSMDSLYEPIPEQQANQENMSSRTDSPIPPFGESEQTPNNLFVGVSNLENAKPKKRKLFRRFMSENKIFEGKTVNDKIWQEHSKHKNDSHIRRPCQLKDLNENDFLSNNIHTYQGKTLQGTSYQVTSECWSPFHYQRHVETTVDELVRHFFPDVTI</sequence>
<organism>
    <name type="scientific">Homo sapiens</name>
    <name type="common">Human</name>
    <dbReference type="NCBI Taxonomy" id="9606"/>
    <lineage>
        <taxon>Eukaryota</taxon>
        <taxon>Metazoa</taxon>
        <taxon>Chordata</taxon>
        <taxon>Craniata</taxon>
        <taxon>Vertebrata</taxon>
        <taxon>Euteleostomi</taxon>
        <taxon>Mammalia</taxon>
        <taxon>Eutheria</taxon>
        <taxon>Euarchontoglires</taxon>
        <taxon>Primates</taxon>
        <taxon>Haplorrhini</taxon>
        <taxon>Catarrhini</taxon>
        <taxon>Hominidae</taxon>
        <taxon>Homo</taxon>
    </lineage>
</organism>
<evidence type="ECO:0000256" key="1">
    <source>
        <dbReference type="SAM" id="MobiDB-lite"/>
    </source>
</evidence>
<evidence type="ECO:0000305" key="2"/>
<reference key="1">
    <citation type="journal article" date="2000" name="Nature">
        <title>The DNA sequence of human chromosome 21.</title>
        <authorList>
            <person name="Hattori M."/>
            <person name="Fujiyama A."/>
            <person name="Taylor T.D."/>
            <person name="Watanabe H."/>
            <person name="Yada T."/>
            <person name="Park H.-S."/>
            <person name="Toyoda A."/>
            <person name="Ishii K."/>
            <person name="Totoki Y."/>
            <person name="Choi D.-K."/>
            <person name="Groner Y."/>
            <person name="Soeda E."/>
            <person name="Ohki M."/>
            <person name="Takagi T."/>
            <person name="Sakaki Y."/>
            <person name="Taudien S."/>
            <person name="Blechschmidt K."/>
            <person name="Polley A."/>
            <person name="Menzel U."/>
            <person name="Delabar J."/>
            <person name="Kumpf K."/>
            <person name="Lehmann R."/>
            <person name="Patterson D."/>
            <person name="Reichwald K."/>
            <person name="Rump A."/>
            <person name="Schillhabel M."/>
            <person name="Schudy A."/>
            <person name="Zimmermann W."/>
            <person name="Rosenthal A."/>
            <person name="Kudoh J."/>
            <person name="Shibuya K."/>
            <person name="Kawasaki K."/>
            <person name="Asakawa S."/>
            <person name="Shintani A."/>
            <person name="Sasaki T."/>
            <person name="Nagamine K."/>
            <person name="Mitsuyama S."/>
            <person name="Antonarakis S.E."/>
            <person name="Minoshima S."/>
            <person name="Shimizu N."/>
            <person name="Nordsiek G."/>
            <person name="Hornischer K."/>
            <person name="Brandt P."/>
            <person name="Scharfe M."/>
            <person name="Schoen O."/>
            <person name="Desario A."/>
            <person name="Reichelt J."/>
            <person name="Kauer G."/>
            <person name="Bloecker H."/>
            <person name="Ramser J."/>
            <person name="Beck A."/>
            <person name="Klages S."/>
            <person name="Hennig S."/>
            <person name="Riesselmann L."/>
            <person name="Dagand E."/>
            <person name="Wehrmeyer S."/>
            <person name="Borzym K."/>
            <person name="Gardiner K."/>
            <person name="Nizetic D."/>
            <person name="Francis F."/>
            <person name="Lehrach H."/>
            <person name="Reinhardt R."/>
            <person name="Yaspo M.-L."/>
        </authorList>
    </citation>
    <scope>NUCLEOTIDE SEQUENCE [LARGE SCALE GENOMIC DNA]</scope>
</reference>
<reference key="2">
    <citation type="journal article" date="2004" name="Genome Res.">
        <title>The status, quality, and expansion of the NIH full-length cDNA project: the Mammalian Gene Collection (MGC).</title>
        <authorList>
            <consortium name="The MGC Project Team"/>
        </authorList>
    </citation>
    <scope>NUCLEOTIDE SEQUENCE [LARGE SCALE MRNA]</scope>
    <source>
        <tissue>Retinoblastoma</tissue>
    </source>
</reference>
<feature type="chain" id="PRO_0000346427" description="Putative uncharacterized protein ENSP00000383407">
    <location>
        <begin position="1"/>
        <end position="165"/>
    </location>
</feature>
<feature type="region of interest" description="Disordered" evidence="1">
    <location>
        <begin position="22"/>
        <end position="45"/>
    </location>
</feature>
<feature type="compositionally biased region" description="Polar residues" evidence="1">
    <location>
        <begin position="22"/>
        <end position="34"/>
    </location>
</feature>
<feature type="sequence conflict" description="In Ref. 2; BE784246." evidence="2" ref="2">
    <original>N</original>
    <variation>D</variation>
    <location>
        <position position="112"/>
    </location>
</feature>
<keyword id="KW-1185">Reference proteome</keyword>
<comment type="caution">
    <text evidence="2">Product of a dubious gene prediction.</text>
</comment>
<proteinExistence type="uncertain"/>
<accession>A8MT66</accession>
<protein>
    <recommendedName>
        <fullName>Putative uncharacterized protein ENSP00000383407</fullName>
    </recommendedName>
</protein>
<dbReference type="EMBL" id="AF130351">
    <property type="status" value="NOT_ANNOTATED_CDS"/>
    <property type="molecule type" value="Genomic_DNA"/>
</dbReference>
<dbReference type="EMBL" id="AF165138">
    <property type="status" value="NOT_ANNOTATED_CDS"/>
    <property type="molecule type" value="Genomic_DNA"/>
</dbReference>
<dbReference type="EMBL" id="AF198098">
    <property type="status" value="NOT_ANNOTATED_CDS"/>
    <property type="molecule type" value="Genomic_DNA"/>
</dbReference>
<dbReference type="EMBL" id="BE784246">
    <property type="status" value="NOT_ANNOTATED_CDS"/>
    <property type="molecule type" value="mRNA"/>
</dbReference>
<dbReference type="GlyGen" id="A8MT66">
    <property type="glycosylation" value="1 site, 1 O-linked glycan (1 site)"/>
</dbReference>
<dbReference type="iPTMnet" id="A8MT66"/>
<dbReference type="PhosphoSitePlus" id="A8MT66"/>
<dbReference type="BioMuta" id="-"/>
<dbReference type="PaxDb" id="9606-ENSP00000401381"/>
<dbReference type="AGR" id="HGNC:10528"/>
<dbReference type="neXtProt" id="NX_A8MT66"/>
<dbReference type="eggNOG" id="KOG4384">
    <property type="taxonomic scope" value="Eukaryota"/>
</dbReference>
<dbReference type="InParanoid" id="A8MT66"/>
<dbReference type="PAN-GO" id="A8MT66">
    <property type="GO annotations" value="0 GO annotations based on evolutionary models"/>
</dbReference>
<dbReference type="Pharos" id="A8MT66">
    <property type="development level" value="Tdark"/>
</dbReference>
<dbReference type="Proteomes" id="UP000005640">
    <property type="component" value="Unplaced"/>
</dbReference>
<dbReference type="RNAct" id="A8MT66">
    <property type="molecule type" value="protein"/>
</dbReference>
<name>YU005_HUMAN</name>